<sequence>MNEYQFVLPYPPSLNTYWRRRGSQYYISDKGQKYRKDVQQIIRQLKLDIFTKSRLRIKVIADVPDSRRRDLDNILKGLLDSLIHAGFAEDDEQFDDIRVIRGVKVPGGRLGIKITELESV</sequence>
<reference key="1">
    <citation type="journal article" date="2000" name="J. Mol. Biol.">
        <title>Genomic sequences of bacteriophages HK97 and HK022: pervasive genetic mosaicism in the lambdoid bacteriophages.</title>
        <authorList>
            <person name="Juhala R.J."/>
            <person name="Ford M.E."/>
            <person name="Duda R.L."/>
            <person name="Youlton A."/>
            <person name="Hatfull G.F."/>
            <person name="Hendrix R.W."/>
        </authorList>
    </citation>
    <scope>NUCLEOTIDE SEQUENCE [GENOMIC DNA]</scope>
</reference>
<comment type="function">
    <text>Endonuclease that resolves Holliday junction intermediates. Promotes DNA repair. Exhibits sequence and structure-selective cleavage of four-way DNA junctions, where it introduces symmetrical nicks in two strands of the same polarity.</text>
</comment>
<comment type="catalytic activity">
    <reaction>
        <text>Endonucleolytic cleavage at a junction such as a reciprocal single-stranded crossover between two homologous DNA duplexes (Holliday junction).</text>
        <dbReference type="EC" id="3.1.21.10"/>
    </reaction>
</comment>
<comment type="cofactor">
    <cofactor evidence="1">
        <name>Mg(2+)</name>
        <dbReference type="ChEBI" id="CHEBI:18420"/>
    </cofactor>
    <text evidence="1">Binds 1 Mg(2+) ion per subunit.</text>
</comment>
<comment type="subunit">
    <text evidence="1">Homodimer.</text>
</comment>
<comment type="similarity">
    <text evidence="2">Belongs to the RusA family.</text>
</comment>
<accession>Q9MCN8</accession>
<protein>
    <recommendedName>
        <fullName>Crossover junction endodeoxyribonuclease rusA</fullName>
        <ecNumber>3.1.21.10</ecNumber>
    </recommendedName>
    <alternativeName>
        <fullName>Gp67</fullName>
    </alternativeName>
    <alternativeName>
        <fullName>Holliday junction nuclease rusA</fullName>
    </alternativeName>
    <alternativeName>
        <fullName>Holliday junction resolvase</fullName>
    </alternativeName>
</protein>
<feature type="chain" id="PRO_0000192007" description="Crossover junction endodeoxyribonuclease rusA">
    <location>
        <begin position="1"/>
        <end position="120"/>
    </location>
</feature>
<feature type="binding site" evidence="1">
    <location>
        <position position="70"/>
    </location>
    <ligand>
        <name>Mg(2+)</name>
        <dbReference type="ChEBI" id="CHEBI:18420"/>
    </ligand>
</feature>
<feature type="binding site" evidence="1">
    <location>
        <position position="72"/>
    </location>
    <ligand>
        <name>Mg(2+)</name>
        <dbReference type="ChEBI" id="CHEBI:18420"/>
    </ligand>
</feature>
<feature type="binding site" evidence="1">
    <location>
        <position position="91"/>
    </location>
    <ligand>
        <name>Mg(2+)</name>
        <dbReference type="ChEBI" id="CHEBI:18420"/>
    </ligand>
</feature>
<evidence type="ECO:0000250" key="1"/>
<evidence type="ECO:0000305" key="2"/>
<gene>
    <name type="primary">rusA</name>
    <name type="synonym">67</name>
</gene>
<proteinExistence type="inferred from homology"/>
<organismHost>
    <name type="scientific">Escherichia coli</name>
    <dbReference type="NCBI Taxonomy" id="562"/>
</organismHost>
<dbReference type="EC" id="3.1.21.10"/>
<dbReference type="EMBL" id="AF069529">
    <property type="protein sequence ID" value="AAF31142.1"/>
    <property type="molecule type" value="Genomic_DNA"/>
</dbReference>
<dbReference type="RefSeq" id="NP_037749.1">
    <property type="nucleotide sequence ID" value="NC_002167.1"/>
</dbReference>
<dbReference type="SMR" id="Q9MCN8"/>
<dbReference type="GeneID" id="1262586"/>
<dbReference type="KEGG" id="vg:1262586"/>
<dbReference type="Proteomes" id="UP000002576">
    <property type="component" value="Genome"/>
</dbReference>
<dbReference type="GO" id="GO:0008821">
    <property type="term" value="F:crossover junction DNA endonuclease activity"/>
    <property type="evidence" value="ECO:0007669"/>
    <property type="project" value="InterPro"/>
</dbReference>
<dbReference type="GO" id="GO:0000287">
    <property type="term" value="F:magnesium ion binding"/>
    <property type="evidence" value="ECO:0007669"/>
    <property type="project" value="InterPro"/>
</dbReference>
<dbReference type="GO" id="GO:0006310">
    <property type="term" value="P:DNA recombination"/>
    <property type="evidence" value="ECO:0007669"/>
    <property type="project" value="UniProtKB-KW"/>
</dbReference>
<dbReference type="GO" id="GO:0006281">
    <property type="term" value="P:DNA repair"/>
    <property type="evidence" value="ECO:0007669"/>
    <property type="project" value="UniProtKB-KW"/>
</dbReference>
<dbReference type="Gene3D" id="3.30.1330.70">
    <property type="entry name" value="Holliday junction resolvase RusA"/>
    <property type="match status" value="1"/>
</dbReference>
<dbReference type="InterPro" id="IPR016281">
    <property type="entry name" value="Endonuclease_RusA"/>
</dbReference>
<dbReference type="InterPro" id="IPR008822">
    <property type="entry name" value="Endonuclease_RusA-like"/>
</dbReference>
<dbReference type="InterPro" id="IPR036614">
    <property type="entry name" value="RusA-like_sf"/>
</dbReference>
<dbReference type="Pfam" id="PF05866">
    <property type="entry name" value="RusA"/>
    <property type="match status" value="1"/>
</dbReference>
<dbReference type="PIRSF" id="PIRSF001007">
    <property type="entry name" value="RusA"/>
    <property type="match status" value="1"/>
</dbReference>
<dbReference type="SUPFAM" id="SSF103084">
    <property type="entry name" value="Holliday junction resolvase RusA"/>
    <property type="match status" value="1"/>
</dbReference>
<name>RUSA_BPHK7</name>
<organism>
    <name type="scientific">Enterobacteria phage HK97</name>
    <name type="common">Bacteriophage HK97</name>
    <dbReference type="NCBI Taxonomy" id="2681617"/>
    <lineage>
        <taxon>Viruses</taxon>
        <taxon>Duplodnaviria</taxon>
        <taxon>Heunggongvirae</taxon>
        <taxon>Uroviricota</taxon>
        <taxon>Caudoviricetes</taxon>
        <taxon>Hendrixvirinae</taxon>
        <taxon>Byrnievirus</taxon>
        <taxon>Byrnievirus HK97</taxon>
    </lineage>
</organism>
<keyword id="KW-0227">DNA damage</keyword>
<keyword id="KW-0233">DNA recombination</keyword>
<keyword id="KW-0234">DNA repair</keyword>
<keyword id="KW-0255">Endonuclease</keyword>
<keyword id="KW-0378">Hydrolase</keyword>
<keyword id="KW-0460">Magnesium</keyword>
<keyword id="KW-0479">Metal-binding</keyword>
<keyword id="KW-0540">Nuclease</keyword>
<keyword id="KW-1185">Reference proteome</keyword>